<comment type="function">
    <text evidence="1">Catalyzes the reversible reaction in which hydroxymethyl group from 5,10-methylenetetrahydrofolate is transferred onto alpha-ketoisovalerate to form ketopantoate.</text>
</comment>
<comment type="catalytic activity">
    <reaction evidence="1">
        <text>3-methyl-2-oxobutanoate + (6R)-5,10-methylene-5,6,7,8-tetrahydrofolate + H2O = 2-dehydropantoate + (6S)-5,6,7,8-tetrahydrofolate</text>
        <dbReference type="Rhea" id="RHEA:11824"/>
        <dbReference type="ChEBI" id="CHEBI:11561"/>
        <dbReference type="ChEBI" id="CHEBI:11851"/>
        <dbReference type="ChEBI" id="CHEBI:15377"/>
        <dbReference type="ChEBI" id="CHEBI:15636"/>
        <dbReference type="ChEBI" id="CHEBI:57453"/>
        <dbReference type="EC" id="2.1.2.11"/>
    </reaction>
</comment>
<comment type="cofactor">
    <cofactor evidence="1">
        <name>Mg(2+)</name>
        <dbReference type="ChEBI" id="CHEBI:18420"/>
    </cofactor>
    <text evidence="1">Binds 1 Mg(2+) ion per subunit.</text>
</comment>
<comment type="pathway">
    <text evidence="1">Cofactor biosynthesis; coenzyme A biosynthesis.</text>
</comment>
<comment type="subunit">
    <text evidence="1">Homodecamer; pentamer of dimers.</text>
</comment>
<comment type="subcellular location">
    <subcellularLocation>
        <location evidence="1">Cytoplasm</location>
    </subcellularLocation>
</comment>
<comment type="similarity">
    <text evidence="1">Belongs to the PanB family.</text>
</comment>
<gene>
    <name evidence="1" type="primary">panB</name>
    <name type="ordered locus">Tneu_0314</name>
</gene>
<protein>
    <recommendedName>
        <fullName evidence="1">3-methyl-2-oxobutanoate hydroxymethyltransferase</fullName>
        <ecNumber evidence="1">2.1.2.11</ecNumber>
    </recommendedName>
    <alternativeName>
        <fullName evidence="1">Ketopantoate hydroxymethyltransferase</fullName>
        <shortName evidence="1">KPHMT</shortName>
    </alternativeName>
</protein>
<name>PANB_PYRNV</name>
<proteinExistence type="inferred from homology"/>
<reference key="1">
    <citation type="submission" date="2008-03" db="EMBL/GenBank/DDBJ databases">
        <title>Complete sequence of Thermoproteus neutrophilus V24Sta.</title>
        <authorList>
            <consortium name="US DOE Joint Genome Institute"/>
            <person name="Copeland A."/>
            <person name="Lucas S."/>
            <person name="Lapidus A."/>
            <person name="Glavina del Rio T."/>
            <person name="Dalin E."/>
            <person name="Tice H."/>
            <person name="Bruce D."/>
            <person name="Goodwin L."/>
            <person name="Pitluck S."/>
            <person name="Sims D."/>
            <person name="Brettin T."/>
            <person name="Detter J.C."/>
            <person name="Han C."/>
            <person name="Kuske C.R."/>
            <person name="Schmutz J."/>
            <person name="Larimer F."/>
            <person name="Land M."/>
            <person name="Hauser L."/>
            <person name="Kyrpides N."/>
            <person name="Mikhailova N."/>
            <person name="Biddle J.F."/>
            <person name="Zhang Z."/>
            <person name="Fitz-Gibbon S.T."/>
            <person name="Lowe T.M."/>
            <person name="Saltikov C."/>
            <person name="House C.H."/>
            <person name="Richardson P."/>
        </authorList>
    </citation>
    <scope>NUCLEOTIDE SEQUENCE [LARGE SCALE GENOMIC DNA]</scope>
    <source>
        <strain>DSM 2338 / JCM 9278 / NBRC 100436 / V24Sta</strain>
    </source>
</reference>
<feature type="chain" id="PRO_1000097012" description="3-methyl-2-oxobutanoate hydroxymethyltransferase">
    <location>
        <begin position="1"/>
        <end position="261"/>
    </location>
</feature>
<feature type="active site" description="Proton acceptor" evidence="1">
    <location>
        <position position="179"/>
    </location>
</feature>
<feature type="binding site" evidence="1">
    <location>
        <begin position="42"/>
        <end position="43"/>
    </location>
    <ligand>
        <name>3-methyl-2-oxobutanoate</name>
        <dbReference type="ChEBI" id="CHEBI:11851"/>
    </ligand>
</feature>
<feature type="binding site" evidence="1">
    <location>
        <position position="42"/>
    </location>
    <ligand>
        <name>Mg(2+)</name>
        <dbReference type="ChEBI" id="CHEBI:18420"/>
    </ligand>
</feature>
<feature type="binding site" evidence="1">
    <location>
        <position position="81"/>
    </location>
    <ligand>
        <name>3-methyl-2-oxobutanoate</name>
        <dbReference type="ChEBI" id="CHEBI:11851"/>
    </ligand>
</feature>
<feature type="binding site" evidence="1">
    <location>
        <position position="81"/>
    </location>
    <ligand>
        <name>Mg(2+)</name>
        <dbReference type="ChEBI" id="CHEBI:18420"/>
    </ligand>
</feature>
<feature type="binding site" evidence="1">
    <location>
        <position position="110"/>
    </location>
    <ligand>
        <name>3-methyl-2-oxobutanoate</name>
        <dbReference type="ChEBI" id="CHEBI:11851"/>
    </ligand>
</feature>
<feature type="binding site" evidence="1">
    <location>
        <position position="112"/>
    </location>
    <ligand>
        <name>Mg(2+)</name>
        <dbReference type="ChEBI" id="CHEBI:18420"/>
    </ligand>
</feature>
<sequence>MPRKSVLDFAKGRGAYVWITAYDYPTAKAVDEAGVDGILVGDSLGMVLLGLPNTLGVTMEDMVRHTEAVARARPRALVVADMPFMSYETGPEDALRNAARLVKAGADAVKLEGGTEYAPIVERLVKAGIPVMGHIGLTPQRFLTIGGFKMVGKTEEQRRKILEDAKALRDAGVFSIVLEFVPASLAREVTQAVDVPTICIGSGPHCDGQILVLHDVVGLTERPPSFAKKYADVAAAIREAVSKYAEEVRKGLFPAREHYRE</sequence>
<evidence type="ECO:0000255" key="1">
    <source>
        <dbReference type="HAMAP-Rule" id="MF_00156"/>
    </source>
</evidence>
<organism>
    <name type="scientific">Pyrobaculum neutrophilum (strain DSM 2338 / JCM 9278 / NBRC 100436 / V24Sta)</name>
    <name type="common">Thermoproteus neutrophilus</name>
    <dbReference type="NCBI Taxonomy" id="444157"/>
    <lineage>
        <taxon>Archaea</taxon>
        <taxon>Thermoproteota</taxon>
        <taxon>Thermoprotei</taxon>
        <taxon>Thermoproteales</taxon>
        <taxon>Thermoproteaceae</taxon>
        <taxon>Pyrobaculum</taxon>
    </lineage>
</organism>
<accession>B1YBD4</accession>
<keyword id="KW-0173">Coenzyme A biosynthesis</keyword>
<keyword id="KW-0963">Cytoplasm</keyword>
<keyword id="KW-0460">Magnesium</keyword>
<keyword id="KW-0479">Metal-binding</keyword>
<keyword id="KW-0808">Transferase</keyword>
<dbReference type="EC" id="2.1.2.11" evidence="1"/>
<dbReference type="EMBL" id="CP001014">
    <property type="protein sequence ID" value="ACB39265.1"/>
    <property type="molecule type" value="Genomic_DNA"/>
</dbReference>
<dbReference type="RefSeq" id="WP_012349686.1">
    <property type="nucleotide sequence ID" value="NC_010525.1"/>
</dbReference>
<dbReference type="SMR" id="B1YBD4"/>
<dbReference type="STRING" id="444157.Tneu_0314"/>
<dbReference type="GeneID" id="6166308"/>
<dbReference type="KEGG" id="tne:Tneu_0314"/>
<dbReference type="eggNOG" id="arCOG00584">
    <property type="taxonomic scope" value="Archaea"/>
</dbReference>
<dbReference type="HOGENOM" id="CLU_036645_1_0_2"/>
<dbReference type="OrthoDB" id="8414at2157"/>
<dbReference type="UniPathway" id="UPA00241"/>
<dbReference type="Proteomes" id="UP000001694">
    <property type="component" value="Chromosome"/>
</dbReference>
<dbReference type="GO" id="GO:0005737">
    <property type="term" value="C:cytoplasm"/>
    <property type="evidence" value="ECO:0007669"/>
    <property type="project" value="UniProtKB-SubCell"/>
</dbReference>
<dbReference type="GO" id="GO:0003864">
    <property type="term" value="F:3-methyl-2-oxobutanoate hydroxymethyltransferase activity"/>
    <property type="evidence" value="ECO:0007669"/>
    <property type="project" value="UniProtKB-UniRule"/>
</dbReference>
<dbReference type="GO" id="GO:0000287">
    <property type="term" value="F:magnesium ion binding"/>
    <property type="evidence" value="ECO:0007669"/>
    <property type="project" value="TreeGrafter"/>
</dbReference>
<dbReference type="GO" id="GO:0015937">
    <property type="term" value="P:coenzyme A biosynthetic process"/>
    <property type="evidence" value="ECO:0007669"/>
    <property type="project" value="UniProtKB-UniRule"/>
</dbReference>
<dbReference type="GO" id="GO:0015940">
    <property type="term" value="P:pantothenate biosynthetic process"/>
    <property type="evidence" value="ECO:0007669"/>
    <property type="project" value="InterPro"/>
</dbReference>
<dbReference type="CDD" id="cd06557">
    <property type="entry name" value="KPHMT-like"/>
    <property type="match status" value="1"/>
</dbReference>
<dbReference type="FunFam" id="3.20.20.60:FF:000003">
    <property type="entry name" value="3-methyl-2-oxobutanoate hydroxymethyltransferase"/>
    <property type="match status" value="1"/>
</dbReference>
<dbReference type="Gene3D" id="3.20.20.60">
    <property type="entry name" value="Phosphoenolpyruvate-binding domains"/>
    <property type="match status" value="1"/>
</dbReference>
<dbReference type="HAMAP" id="MF_00156">
    <property type="entry name" value="PanB"/>
    <property type="match status" value="1"/>
</dbReference>
<dbReference type="InterPro" id="IPR003700">
    <property type="entry name" value="Pantoate_hydroxy_MeTrfase"/>
</dbReference>
<dbReference type="InterPro" id="IPR015813">
    <property type="entry name" value="Pyrv/PenolPyrv_kinase-like_dom"/>
</dbReference>
<dbReference type="InterPro" id="IPR040442">
    <property type="entry name" value="Pyrv_kinase-like_dom_sf"/>
</dbReference>
<dbReference type="NCBIfam" id="TIGR00222">
    <property type="entry name" value="panB"/>
    <property type="match status" value="1"/>
</dbReference>
<dbReference type="NCBIfam" id="NF001452">
    <property type="entry name" value="PRK00311.1"/>
    <property type="match status" value="1"/>
</dbReference>
<dbReference type="PANTHER" id="PTHR20881">
    <property type="entry name" value="3-METHYL-2-OXOBUTANOATE HYDROXYMETHYLTRANSFERASE"/>
    <property type="match status" value="1"/>
</dbReference>
<dbReference type="PANTHER" id="PTHR20881:SF0">
    <property type="entry name" value="3-METHYL-2-OXOBUTANOATE HYDROXYMETHYLTRANSFERASE"/>
    <property type="match status" value="1"/>
</dbReference>
<dbReference type="Pfam" id="PF02548">
    <property type="entry name" value="Pantoate_transf"/>
    <property type="match status" value="1"/>
</dbReference>
<dbReference type="PIRSF" id="PIRSF000388">
    <property type="entry name" value="Pantoate_hydroxy_MeTrfase"/>
    <property type="match status" value="1"/>
</dbReference>
<dbReference type="SUPFAM" id="SSF51621">
    <property type="entry name" value="Phosphoenolpyruvate/pyruvate domain"/>
    <property type="match status" value="1"/>
</dbReference>